<sequence length="315" mass="34828">MSKPRKQQHRKPKGRPISGWLILDKPLDFGSTEAVSKIKWLFNAQKAGHAGTLDPLASGMLPIALGDATKTVPYVMDGRKIYEFTVTWGEQRATDDLEGEVVESSDQRPEEQAIRDILPNYTGVIMQTPPQFSAIKIAGERAYDLARDGETVEIPAREVEIHRLTLLACPDADTAHFEVECGKGTYVRALARDMGRDLGCFGHISELRRTMVAPFGEDMMVPLETLTALEAIEDRDERLEALDAFLIDTAEALSSLPRLIINDDQAHRLKMGNPILLRGRDAPANHPEAYATAQGKLVAIGEIGEGEFRPKRVFG</sequence>
<evidence type="ECO:0000255" key="1">
    <source>
        <dbReference type="HAMAP-Rule" id="MF_01080"/>
    </source>
</evidence>
<organism>
    <name type="scientific">Agrobacterium fabrum (strain C58 / ATCC 33970)</name>
    <name type="common">Agrobacterium tumefaciens (strain C58)</name>
    <dbReference type="NCBI Taxonomy" id="176299"/>
    <lineage>
        <taxon>Bacteria</taxon>
        <taxon>Pseudomonadati</taxon>
        <taxon>Pseudomonadota</taxon>
        <taxon>Alphaproteobacteria</taxon>
        <taxon>Hyphomicrobiales</taxon>
        <taxon>Rhizobiaceae</taxon>
        <taxon>Rhizobium/Agrobacterium group</taxon>
        <taxon>Agrobacterium</taxon>
        <taxon>Agrobacterium tumefaciens complex</taxon>
    </lineage>
</organism>
<accession>Q8UJ53</accession>
<comment type="function">
    <text evidence="1">Responsible for synthesis of pseudouridine from uracil-55 in the psi GC loop of transfer RNAs.</text>
</comment>
<comment type="catalytic activity">
    <reaction evidence="1">
        <text>uridine(55) in tRNA = pseudouridine(55) in tRNA</text>
        <dbReference type="Rhea" id="RHEA:42532"/>
        <dbReference type="Rhea" id="RHEA-COMP:10101"/>
        <dbReference type="Rhea" id="RHEA-COMP:10102"/>
        <dbReference type="ChEBI" id="CHEBI:65314"/>
        <dbReference type="ChEBI" id="CHEBI:65315"/>
        <dbReference type="EC" id="5.4.99.25"/>
    </reaction>
</comment>
<comment type="similarity">
    <text evidence="1">Belongs to the pseudouridine synthase TruB family. Type 1 subfamily.</text>
</comment>
<keyword id="KW-0413">Isomerase</keyword>
<keyword id="KW-1185">Reference proteome</keyword>
<keyword id="KW-0819">tRNA processing</keyword>
<feature type="chain" id="PRO_0000121778" description="tRNA pseudouridine synthase B">
    <location>
        <begin position="1"/>
        <end position="315"/>
    </location>
</feature>
<feature type="active site" description="Nucleophile" evidence="1">
    <location>
        <position position="54"/>
    </location>
</feature>
<gene>
    <name evidence="1" type="primary">truB</name>
    <name type="ordered locus">Atu0085</name>
    <name type="ORF">AGR_C_127</name>
</gene>
<protein>
    <recommendedName>
        <fullName evidence="1">tRNA pseudouridine synthase B</fullName>
        <ecNumber evidence="1">5.4.99.25</ecNumber>
    </recommendedName>
    <alternativeName>
        <fullName evidence="1">tRNA pseudouridine(55) synthase</fullName>
        <shortName evidence="1">Psi55 synthase</shortName>
    </alternativeName>
    <alternativeName>
        <fullName evidence="1">tRNA pseudouridylate synthase</fullName>
    </alternativeName>
    <alternativeName>
        <fullName evidence="1">tRNA-uridine isomerase</fullName>
    </alternativeName>
</protein>
<name>TRUB_AGRFC</name>
<proteinExistence type="inferred from homology"/>
<dbReference type="EC" id="5.4.99.25" evidence="1"/>
<dbReference type="EMBL" id="AE007869">
    <property type="protein sequence ID" value="AAK85905.1"/>
    <property type="molecule type" value="Genomic_DNA"/>
</dbReference>
<dbReference type="PIR" id="AH2586">
    <property type="entry name" value="AH2586"/>
</dbReference>
<dbReference type="PIR" id="H97368">
    <property type="entry name" value="H97368"/>
</dbReference>
<dbReference type="RefSeq" id="NP_353120.1">
    <property type="nucleotide sequence ID" value="NC_003062.2"/>
</dbReference>
<dbReference type="RefSeq" id="WP_006309909.1">
    <property type="nucleotide sequence ID" value="NC_003062.2"/>
</dbReference>
<dbReference type="SMR" id="Q8UJ53"/>
<dbReference type="STRING" id="176299.Atu0085"/>
<dbReference type="EnsemblBacteria" id="AAK85905">
    <property type="protein sequence ID" value="AAK85905"/>
    <property type="gene ID" value="Atu0085"/>
</dbReference>
<dbReference type="GeneID" id="1132123"/>
<dbReference type="KEGG" id="atu:Atu0085"/>
<dbReference type="PATRIC" id="fig|176299.10.peg.78"/>
<dbReference type="eggNOG" id="COG0130">
    <property type="taxonomic scope" value="Bacteria"/>
</dbReference>
<dbReference type="HOGENOM" id="CLU_032087_0_3_5"/>
<dbReference type="OrthoDB" id="9802309at2"/>
<dbReference type="PhylomeDB" id="Q8UJ53"/>
<dbReference type="BioCyc" id="AGRO:ATU0085-MONOMER"/>
<dbReference type="Proteomes" id="UP000000813">
    <property type="component" value="Chromosome circular"/>
</dbReference>
<dbReference type="GO" id="GO:0003723">
    <property type="term" value="F:RNA binding"/>
    <property type="evidence" value="ECO:0007669"/>
    <property type="project" value="InterPro"/>
</dbReference>
<dbReference type="GO" id="GO:0160148">
    <property type="term" value="F:tRNA pseudouridine(55) synthase activity"/>
    <property type="evidence" value="ECO:0007669"/>
    <property type="project" value="UniProtKB-EC"/>
</dbReference>
<dbReference type="GO" id="GO:1990481">
    <property type="term" value="P:mRNA pseudouridine synthesis"/>
    <property type="evidence" value="ECO:0007669"/>
    <property type="project" value="TreeGrafter"/>
</dbReference>
<dbReference type="GO" id="GO:0031119">
    <property type="term" value="P:tRNA pseudouridine synthesis"/>
    <property type="evidence" value="ECO:0007669"/>
    <property type="project" value="UniProtKB-UniRule"/>
</dbReference>
<dbReference type="CDD" id="cd02573">
    <property type="entry name" value="PseudoU_synth_EcTruB"/>
    <property type="match status" value="1"/>
</dbReference>
<dbReference type="Gene3D" id="3.30.2350.10">
    <property type="entry name" value="Pseudouridine synthase"/>
    <property type="match status" value="1"/>
</dbReference>
<dbReference type="HAMAP" id="MF_01080">
    <property type="entry name" value="TruB_bact"/>
    <property type="match status" value="1"/>
</dbReference>
<dbReference type="InterPro" id="IPR020103">
    <property type="entry name" value="PsdUridine_synth_cat_dom_sf"/>
</dbReference>
<dbReference type="InterPro" id="IPR002501">
    <property type="entry name" value="PsdUridine_synth_N"/>
</dbReference>
<dbReference type="InterPro" id="IPR015947">
    <property type="entry name" value="PUA-like_sf"/>
</dbReference>
<dbReference type="InterPro" id="IPR014780">
    <property type="entry name" value="tRNA_psdUridine_synth_TruB"/>
</dbReference>
<dbReference type="InterPro" id="IPR032819">
    <property type="entry name" value="TruB_C"/>
</dbReference>
<dbReference type="NCBIfam" id="TIGR00431">
    <property type="entry name" value="TruB"/>
    <property type="match status" value="1"/>
</dbReference>
<dbReference type="PANTHER" id="PTHR13767:SF2">
    <property type="entry name" value="PSEUDOURIDYLATE SYNTHASE TRUB1"/>
    <property type="match status" value="1"/>
</dbReference>
<dbReference type="PANTHER" id="PTHR13767">
    <property type="entry name" value="TRNA-PSEUDOURIDINE SYNTHASE"/>
    <property type="match status" value="1"/>
</dbReference>
<dbReference type="Pfam" id="PF16198">
    <property type="entry name" value="TruB_C_2"/>
    <property type="match status" value="1"/>
</dbReference>
<dbReference type="Pfam" id="PF01509">
    <property type="entry name" value="TruB_N"/>
    <property type="match status" value="1"/>
</dbReference>
<dbReference type="SUPFAM" id="SSF55120">
    <property type="entry name" value="Pseudouridine synthase"/>
    <property type="match status" value="1"/>
</dbReference>
<dbReference type="SUPFAM" id="SSF88697">
    <property type="entry name" value="PUA domain-like"/>
    <property type="match status" value="1"/>
</dbReference>
<reference key="1">
    <citation type="journal article" date="2001" name="Science">
        <title>The genome of the natural genetic engineer Agrobacterium tumefaciens C58.</title>
        <authorList>
            <person name="Wood D.W."/>
            <person name="Setubal J.C."/>
            <person name="Kaul R."/>
            <person name="Monks D.E."/>
            <person name="Kitajima J.P."/>
            <person name="Okura V.K."/>
            <person name="Zhou Y."/>
            <person name="Chen L."/>
            <person name="Wood G.E."/>
            <person name="Almeida N.F. Jr."/>
            <person name="Woo L."/>
            <person name="Chen Y."/>
            <person name="Paulsen I.T."/>
            <person name="Eisen J.A."/>
            <person name="Karp P.D."/>
            <person name="Bovee D. Sr."/>
            <person name="Chapman P."/>
            <person name="Clendenning J."/>
            <person name="Deatherage G."/>
            <person name="Gillet W."/>
            <person name="Grant C."/>
            <person name="Kutyavin T."/>
            <person name="Levy R."/>
            <person name="Li M.-J."/>
            <person name="McClelland E."/>
            <person name="Palmieri A."/>
            <person name="Raymond C."/>
            <person name="Rouse G."/>
            <person name="Saenphimmachak C."/>
            <person name="Wu Z."/>
            <person name="Romero P."/>
            <person name="Gordon D."/>
            <person name="Zhang S."/>
            <person name="Yoo H."/>
            <person name="Tao Y."/>
            <person name="Biddle P."/>
            <person name="Jung M."/>
            <person name="Krespan W."/>
            <person name="Perry M."/>
            <person name="Gordon-Kamm B."/>
            <person name="Liao L."/>
            <person name="Kim S."/>
            <person name="Hendrick C."/>
            <person name="Zhao Z.-Y."/>
            <person name="Dolan M."/>
            <person name="Chumley F."/>
            <person name="Tingey S.V."/>
            <person name="Tomb J.-F."/>
            <person name="Gordon M.P."/>
            <person name="Olson M.V."/>
            <person name="Nester E.W."/>
        </authorList>
    </citation>
    <scope>NUCLEOTIDE SEQUENCE [LARGE SCALE GENOMIC DNA]</scope>
    <source>
        <strain>C58 / ATCC 33970</strain>
    </source>
</reference>
<reference key="2">
    <citation type="journal article" date="2001" name="Science">
        <title>Genome sequence of the plant pathogen and biotechnology agent Agrobacterium tumefaciens C58.</title>
        <authorList>
            <person name="Goodner B."/>
            <person name="Hinkle G."/>
            <person name="Gattung S."/>
            <person name="Miller N."/>
            <person name="Blanchard M."/>
            <person name="Qurollo B."/>
            <person name="Goldman B.S."/>
            <person name="Cao Y."/>
            <person name="Askenazi M."/>
            <person name="Halling C."/>
            <person name="Mullin L."/>
            <person name="Houmiel K."/>
            <person name="Gordon J."/>
            <person name="Vaudin M."/>
            <person name="Iartchouk O."/>
            <person name="Epp A."/>
            <person name="Liu F."/>
            <person name="Wollam C."/>
            <person name="Allinger M."/>
            <person name="Doughty D."/>
            <person name="Scott C."/>
            <person name="Lappas C."/>
            <person name="Markelz B."/>
            <person name="Flanagan C."/>
            <person name="Crowell C."/>
            <person name="Gurson J."/>
            <person name="Lomo C."/>
            <person name="Sear C."/>
            <person name="Strub G."/>
            <person name="Cielo C."/>
            <person name="Slater S."/>
        </authorList>
    </citation>
    <scope>NUCLEOTIDE SEQUENCE [LARGE SCALE GENOMIC DNA]</scope>
    <source>
        <strain>C58 / ATCC 33970</strain>
    </source>
</reference>